<accession>Q6AL81</accession>
<evidence type="ECO:0000255" key="1">
    <source>
        <dbReference type="HAMAP-Rule" id="MF_01642"/>
    </source>
</evidence>
<evidence type="ECO:0000305" key="2"/>
<proteinExistence type="inferred from homology"/>
<comment type="function">
    <text evidence="1">Involved in the synthesis of meso-diaminopimelate (m-DAP or DL-DAP), required for both lysine and peptidoglycan biosynthesis. Catalyzes the direct conversion of tetrahydrodipicolinate to LL-diaminopimelate.</text>
</comment>
<comment type="catalytic activity">
    <reaction evidence="1">
        <text>(2S,6S)-2,6-diaminopimelate + 2-oxoglutarate = (S)-2,3,4,5-tetrahydrodipicolinate + L-glutamate + H2O + H(+)</text>
        <dbReference type="Rhea" id="RHEA:23988"/>
        <dbReference type="ChEBI" id="CHEBI:15377"/>
        <dbReference type="ChEBI" id="CHEBI:15378"/>
        <dbReference type="ChEBI" id="CHEBI:16810"/>
        <dbReference type="ChEBI" id="CHEBI:16845"/>
        <dbReference type="ChEBI" id="CHEBI:29985"/>
        <dbReference type="ChEBI" id="CHEBI:57609"/>
        <dbReference type="EC" id="2.6.1.83"/>
    </reaction>
</comment>
<comment type="cofactor">
    <cofactor evidence="1">
        <name>pyridoxal 5'-phosphate</name>
        <dbReference type="ChEBI" id="CHEBI:597326"/>
    </cofactor>
</comment>
<comment type="pathway">
    <text evidence="1">Amino-acid biosynthesis; L-lysine biosynthesis via DAP pathway; LL-2,6-diaminopimelate from (S)-tetrahydrodipicolinate (aminotransferase route): step 1/1.</text>
</comment>
<comment type="subunit">
    <text evidence="1">Homodimer.</text>
</comment>
<comment type="similarity">
    <text evidence="1">Belongs to the class-I pyridoxal-phosphate-dependent aminotransferase family. LL-diaminopimelate aminotransferase subfamily.</text>
</comment>
<comment type="sequence caution" evidence="2">
    <conflict type="erroneous initiation">
        <sequence resource="EMBL-CDS" id="CAG36894"/>
    </conflict>
    <text>Extended N-terminus.</text>
</comment>
<comment type="sequence caution" evidence="2">
    <conflict type="frameshift">
        <sequence resource="EMBL-CDS" id="CAG36894"/>
    </conflict>
</comment>
<sequence>MITINENYLKLQASYLFSDIAKRVATFQEENPEKEVIKLGIGDVTRGLTPSVIAAFHQAVDEMANDSTFHGYGPEQGYAFLREAIAENDFQSRGAGIVADEIFVSDGAKCDTSNIQEIFSAETKIAIPDPVYPVYLDTNVMAGRTGLFADGRYQNIVYLDSTKENNFVPELPTEKVDLIYLCFPNNPTGSTITKAGLKRWVDYAIENKALILFDAAYEAFIQDDTLPKSIYEIEGADKVAIEFRSFSKNAGFTGTRCAYTVVPKACMAYDSEGNSHSLHSMWNRRHCTKFNGVSYPIQRAAAATYTPEGKAECKELIDYYMANAKVVXSNHDKLGYSYVGGENSPYIWIDGKTDSWEFFDMLLSKAGVVCTPGAGFGTCCGNGYIRISAFNSPENIEKAMARITEALS</sequence>
<keyword id="KW-0032">Aminotransferase</keyword>
<keyword id="KW-0663">Pyridoxal phosphate</keyword>
<keyword id="KW-1185">Reference proteome</keyword>
<keyword id="KW-0808">Transferase</keyword>
<organism>
    <name type="scientific">Desulfotalea psychrophila (strain LSv54 / DSM 12343)</name>
    <dbReference type="NCBI Taxonomy" id="177439"/>
    <lineage>
        <taxon>Bacteria</taxon>
        <taxon>Pseudomonadati</taxon>
        <taxon>Thermodesulfobacteriota</taxon>
        <taxon>Desulfobulbia</taxon>
        <taxon>Desulfobulbales</taxon>
        <taxon>Desulfocapsaceae</taxon>
        <taxon>Desulfotalea</taxon>
    </lineage>
</organism>
<gene>
    <name evidence="1" type="primary">dapL</name>
    <name type="ordered locus">DP2165</name>
</gene>
<feature type="chain" id="PRO_0000342234" description="LL-diaminopimelate aminotransferase">
    <location>
        <begin position="1"/>
        <end position="408"/>
    </location>
</feature>
<feature type="binding site" evidence="1">
    <location>
        <position position="15"/>
    </location>
    <ligand>
        <name>substrate</name>
    </ligand>
</feature>
<feature type="binding site" evidence="1">
    <location>
        <position position="42"/>
    </location>
    <ligand>
        <name>substrate</name>
    </ligand>
</feature>
<feature type="binding site" evidence="1">
    <location>
        <position position="72"/>
    </location>
    <ligand>
        <name>pyridoxal 5'-phosphate</name>
        <dbReference type="ChEBI" id="CHEBI:597326"/>
    </ligand>
</feature>
<feature type="binding site" evidence="1">
    <location>
        <begin position="108"/>
        <end position="109"/>
    </location>
    <ligand>
        <name>pyridoxal 5'-phosphate</name>
        <dbReference type="ChEBI" id="CHEBI:597326"/>
    </ligand>
</feature>
<feature type="binding site" evidence="1">
    <location>
        <position position="109"/>
    </location>
    <ligand>
        <name>substrate</name>
    </ligand>
</feature>
<feature type="binding site" evidence="1">
    <location>
        <position position="132"/>
    </location>
    <ligand>
        <name>pyridoxal 5'-phosphate</name>
        <dbReference type="ChEBI" id="CHEBI:597326"/>
    </ligand>
</feature>
<feature type="binding site" evidence="1">
    <location>
        <position position="132"/>
    </location>
    <ligand>
        <name>substrate</name>
    </ligand>
</feature>
<feature type="binding site" evidence="1">
    <location>
        <position position="186"/>
    </location>
    <ligand>
        <name>pyridoxal 5'-phosphate</name>
        <dbReference type="ChEBI" id="CHEBI:597326"/>
    </ligand>
</feature>
<feature type="binding site" evidence="1">
    <location>
        <position position="186"/>
    </location>
    <ligand>
        <name>substrate</name>
    </ligand>
</feature>
<feature type="binding site" evidence="1">
    <location>
        <position position="217"/>
    </location>
    <ligand>
        <name>pyridoxal 5'-phosphate</name>
        <dbReference type="ChEBI" id="CHEBI:597326"/>
    </ligand>
</feature>
<feature type="binding site" evidence="1">
    <location>
        <begin position="245"/>
        <end position="247"/>
    </location>
    <ligand>
        <name>pyridoxal 5'-phosphate</name>
        <dbReference type="ChEBI" id="CHEBI:597326"/>
    </ligand>
</feature>
<feature type="binding site" evidence="1">
    <location>
        <position position="256"/>
    </location>
    <ligand>
        <name>pyridoxal 5'-phosphate</name>
        <dbReference type="ChEBI" id="CHEBI:597326"/>
    </ligand>
</feature>
<feature type="binding site" evidence="1">
    <location>
        <position position="291"/>
    </location>
    <ligand>
        <name>pyridoxal 5'-phosphate</name>
        <dbReference type="ChEBI" id="CHEBI:597326"/>
    </ligand>
</feature>
<feature type="binding site" evidence="1">
    <location>
        <position position="291"/>
    </location>
    <ligand>
        <name>substrate</name>
    </ligand>
</feature>
<feature type="binding site" evidence="1">
    <location>
        <position position="386"/>
    </location>
    <ligand>
        <name>substrate</name>
    </ligand>
</feature>
<feature type="modified residue" description="N6-(pyridoxal phosphate)lysine" evidence="1">
    <location>
        <position position="248"/>
    </location>
</feature>
<dbReference type="EC" id="2.6.1.83" evidence="1"/>
<dbReference type="EMBL" id="CR522870">
    <property type="protein sequence ID" value="CAG36894.1"/>
    <property type="status" value="ALT_SEQ"/>
    <property type="molecule type" value="Genomic_DNA"/>
</dbReference>
<dbReference type="STRING" id="177439.DP2165"/>
<dbReference type="KEGG" id="dps:DP2165"/>
<dbReference type="eggNOG" id="COG0436">
    <property type="taxonomic scope" value="Bacteria"/>
</dbReference>
<dbReference type="HOGENOM" id="CLU_051433_0_0_7"/>
<dbReference type="UniPathway" id="UPA00034">
    <property type="reaction ID" value="UER00466"/>
</dbReference>
<dbReference type="Proteomes" id="UP000000602">
    <property type="component" value="Chromosome"/>
</dbReference>
<dbReference type="GO" id="GO:0010285">
    <property type="term" value="F:L,L-diaminopimelate aminotransferase activity"/>
    <property type="evidence" value="ECO:0007669"/>
    <property type="project" value="UniProtKB-EC"/>
</dbReference>
<dbReference type="GO" id="GO:0030170">
    <property type="term" value="F:pyridoxal phosphate binding"/>
    <property type="evidence" value="ECO:0007669"/>
    <property type="project" value="InterPro"/>
</dbReference>
<dbReference type="GO" id="GO:0009089">
    <property type="term" value="P:lysine biosynthetic process via diaminopimelate"/>
    <property type="evidence" value="ECO:0007669"/>
    <property type="project" value="UniProtKB-UniPathway"/>
</dbReference>
<dbReference type="CDD" id="cd00609">
    <property type="entry name" value="AAT_like"/>
    <property type="match status" value="1"/>
</dbReference>
<dbReference type="FunFam" id="3.40.640.10:FF:000099">
    <property type="entry name" value="LL-diaminopimelate aminotransferase, chloroplastic"/>
    <property type="match status" value="1"/>
</dbReference>
<dbReference type="Gene3D" id="3.90.1150.10">
    <property type="entry name" value="Aspartate Aminotransferase, domain 1"/>
    <property type="match status" value="1"/>
</dbReference>
<dbReference type="Gene3D" id="3.40.640.10">
    <property type="entry name" value="Type I PLP-dependent aspartate aminotransferase-like (Major domain)"/>
    <property type="match status" value="1"/>
</dbReference>
<dbReference type="HAMAP" id="MF_01642">
    <property type="entry name" value="DapL_aminotrans_1"/>
    <property type="match status" value="1"/>
</dbReference>
<dbReference type="InterPro" id="IPR004839">
    <property type="entry name" value="Aminotransferase_I/II_large"/>
</dbReference>
<dbReference type="InterPro" id="IPR019942">
    <property type="entry name" value="DapL/ALD1"/>
</dbReference>
<dbReference type="InterPro" id="IPR015424">
    <property type="entry name" value="PyrdxlP-dep_Trfase"/>
</dbReference>
<dbReference type="InterPro" id="IPR015421">
    <property type="entry name" value="PyrdxlP-dep_Trfase_major"/>
</dbReference>
<dbReference type="InterPro" id="IPR015422">
    <property type="entry name" value="PyrdxlP-dep_Trfase_small"/>
</dbReference>
<dbReference type="NCBIfam" id="TIGR03542">
    <property type="entry name" value="DAPAT_plant"/>
    <property type="match status" value="1"/>
</dbReference>
<dbReference type="PANTHER" id="PTHR43144">
    <property type="entry name" value="AMINOTRANSFERASE"/>
    <property type="match status" value="1"/>
</dbReference>
<dbReference type="Pfam" id="PF00155">
    <property type="entry name" value="Aminotran_1_2"/>
    <property type="match status" value="1"/>
</dbReference>
<dbReference type="SUPFAM" id="SSF53383">
    <property type="entry name" value="PLP-dependent transferases"/>
    <property type="match status" value="1"/>
</dbReference>
<reference key="1">
    <citation type="journal article" date="2004" name="Environ. Microbiol.">
        <title>The genome of Desulfotalea psychrophila, a sulfate-reducing bacterium from permanently cold Arctic sediments.</title>
        <authorList>
            <person name="Rabus R."/>
            <person name="Ruepp A."/>
            <person name="Frickey T."/>
            <person name="Rattei T."/>
            <person name="Fartmann B."/>
            <person name="Stark M."/>
            <person name="Bauer M."/>
            <person name="Zibat A."/>
            <person name="Lombardot T."/>
            <person name="Becker I."/>
            <person name="Amann J."/>
            <person name="Gellner K."/>
            <person name="Teeling H."/>
            <person name="Leuschner W.D."/>
            <person name="Gloeckner F.-O."/>
            <person name="Lupas A.N."/>
            <person name="Amann R."/>
            <person name="Klenk H.-P."/>
        </authorList>
    </citation>
    <scope>NUCLEOTIDE SEQUENCE [LARGE SCALE GENOMIC DNA]</scope>
    <source>
        <strain>DSM 12343 / LSv54</strain>
    </source>
</reference>
<protein>
    <recommendedName>
        <fullName evidence="1">LL-diaminopimelate aminotransferase</fullName>
        <shortName evidence="1">DAP-AT</shortName>
        <shortName evidence="1">DAP-aminotransferase</shortName>
        <shortName evidence="1">LL-DAP-aminotransferase</shortName>
        <ecNumber evidence="1">2.6.1.83</ecNumber>
    </recommendedName>
</protein>
<name>DAPAT_DESPS</name>